<dbReference type="EC" id="1.2.1.71" evidence="1"/>
<dbReference type="EMBL" id="CP000891">
    <property type="protein sequence ID" value="ABX51038.1"/>
    <property type="molecule type" value="Genomic_DNA"/>
</dbReference>
<dbReference type="RefSeq" id="WP_011845734.1">
    <property type="nucleotide sequence ID" value="NC_009997.1"/>
</dbReference>
<dbReference type="SMR" id="A9L3U4"/>
<dbReference type="GeneID" id="11773889"/>
<dbReference type="KEGG" id="sbn:Sbal195_3878"/>
<dbReference type="HOGENOM" id="CLU_005391_1_0_6"/>
<dbReference type="UniPathway" id="UPA00185">
    <property type="reaction ID" value="UER00282"/>
</dbReference>
<dbReference type="Proteomes" id="UP000000770">
    <property type="component" value="Chromosome"/>
</dbReference>
<dbReference type="GO" id="GO:0043824">
    <property type="term" value="F:succinylglutamate-semialdehyde dehydrogenase activity"/>
    <property type="evidence" value="ECO:0007669"/>
    <property type="project" value="UniProtKB-EC"/>
</dbReference>
<dbReference type="GO" id="GO:0019544">
    <property type="term" value="P:arginine catabolic process to glutamate"/>
    <property type="evidence" value="ECO:0007669"/>
    <property type="project" value="UniProtKB-UniRule"/>
</dbReference>
<dbReference type="GO" id="GO:0019545">
    <property type="term" value="P:arginine catabolic process to succinate"/>
    <property type="evidence" value="ECO:0007669"/>
    <property type="project" value="UniProtKB-UniRule"/>
</dbReference>
<dbReference type="CDD" id="cd07095">
    <property type="entry name" value="ALDH_SGSD_AstD"/>
    <property type="match status" value="1"/>
</dbReference>
<dbReference type="FunFam" id="3.40.309.10:FF:000013">
    <property type="entry name" value="N-succinylglutamate 5-semialdehyde dehydrogenase"/>
    <property type="match status" value="1"/>
</dbReference>
<dbReference type="FunFam" id="3.40.605.10:FF:000010">
    <property type="entry name" value="N-succinylglutamate 5-semialdehyde dehydrogenase"/>
    <property type="match status" value="1"/>
</dbReference>
<dbReference type="Gene3D" id="3.40.605.10">
    <property type="entry name" value="Aldehyde Dehydrogenase, Chain A, domain 1"/>
    <property type="match status" value="1"/>
</dbReference>
<dbReference type="Gene3D" id="3.40.309.10">
    <property type="entry name" value="Aldehyde Dehydrogenase, Chain A, domain 2"/>
    <property type="match status" value="1"/>
</dbReference>
<dbReference type="HAMAP" id="MF_01174">
    <property type="entry name" value="Aldedh_AstD"/>
    <property type="match status" value="1"/>
</dbReference>
<dbReference type="InterPro" id="IPR016161">
    <property type="entry name" value="Ald_DH/histidinol_DH"/>
</dbReference>
<dbReference type="InterPro" id="IPR016163">
    <property type="entry name" value="Ald_DH_C"/>
</dbReference>
<dbReference type="InterPro" id="IPR016160">
    <property type="entry name" value="Ald_DH_CS_CYS"/>
</dbReference>
<dbReference type="InterPro" id="IPR029510">
    <property type="entry name" value="Ald_DH_CS_GLU"/>
</dbReference>
<dbReference type="InterPro" id="IPR016162">
    <property type="entry name" value="Ald_DH_N"/>
</dbReference>
<dbReference type="InterPro" id="IPR015590">
    <property type="entry name" value="Aldehyde_DH_dom"/>
</dbReference>
<dbReference type="InterPro" id="IPR017649">
    <property type="entry name" value="SuccinylGlu_semiald_DH_AstD"/>
</dbReference>
<dbReference type="NCBIfam" id="TIGR03240">
    <property type="entry name" value="arg_catab_astD"/>
    <property type="match status" value="1"/>
</dbReference>
<dbReference type="NCBIfam" id="NF006992">
    <property type="entry name" value="PRK09457.1"/>
    <property type="match status" value="1"/>
</dbReference>
<dbReference type="PANTHER" id="PTHR11699">
    <property type="entry name" value="ALDEHYDE DEHYDROGENASE-RELATED"/>
    <property type="match status" value="1"/>
</dbReference>
<dbReference type="Pfam" id="PF00171">
    <property type="entry name" value="Aldedh"/>
    <property type="match status" value="1"/>
</dbReference>
<dbReference type="SUPFAM" id="SSF53720">
    <property type="entry name" value="ALDH-like"/>
    <property type="match status" value="1"/>
</dbReference>
<dbReference type="PROSITE" id="PS00070">
    <property type="entry name" value="ALDEHYDE_DEHYDR_CYS"/>
    <property type="match status" value="1"/>
</dbReference>
<dbReference type="PROSITE" id="PS00687">
    <property type="entry name" value="ALDEHYDE_DEHYDR_GLU"/>
    <property type="match status" value="1"/>
</dbReference>
<reference key="1">
    <citation type="submission" date="2007-11" db="EMBL/GenBank/DDBJ databases">
        <title>Complete sequence of chromosome of Shewanella baltica OS195.</title>
        <authorList>
            <consortium name="US DOE Joint Genome Institute"/>
            <person name="Copeland A."/>
            <person name="Lucas S."/>
            <person name="Lapidus A."/>
            <person name="Barry K."/>
            <person name="Glavina del Rio T."/>
            <person name="Dalin E."/>
            <person name="Tice H."/>
            <person name="Pitluck S."/>
            <person name="Chain P."/>
            <person name="Malfatti S."/>
            <person name="Shin M."/>
            <person name="Vergez L."/>
            <person name="Schmutz J."/>
            <person name="Larimer F."/>
            <person name="Land M."/>
            <person name="Hauser L."/>
            <person name="Kyrpides N."/>
            <person name="Kim E."/>
            <person name="Brettar I."/>
            <person name="Rodrigues J."/>
            <person name="Konstantinidis K."/>
            <person name="Klappenbach J."/>
            <person name="Hofle M."/>
            <person name="Tiedje J."/>
            <person name="Richardson P."/>
        </authorList>
    </citation>
    <scope>NUCLEOTIDE SEQUENCE [LARGE SCALE GENOMIC DNA]</scope>
    <source>
        <strain>OS195</strain>
    </source>
</reference>
<keyword id="KW-0056">Arginine metabolism</keyword>
<keyword id="KW-0520">NAD</keyword>
<keyword id="KW-0560">Oxidoreductase</keyword>
<evidence type="ECO:0000255" key="1">
    <source>
        <dbReference type="HAMAP-Rule" id="MF_01174"/>
    </source>
</evidence>
<accession>A9L3U4</accession>
<sequence>MTHYIQGQWHAGKGHDVASINPANAQTIWTGKTATAEQVNAAVDAAREAQFDWFMLGFDARLAIVEAYRSQLEANKAELAETIAQETGKPQWETATEVGAMIGKIALSAAAYNKRTGTEANDTPAGRAVIRHKPHGVVAVFGPYNFPGHLPNGHIVPALLAGNTVIFKPSELTPKVAELMVSLWDKAGLPAGVLNLVQGEVDTGKALASHPQLDGLFFTGSSRTGHFLHQQYAGHPGKILALEMGGNNPLIIKGVQDIKAAVHDILQSAYISSGQRCTCARRLYVEQGEQGDALIAMLAAAVKQIKVGPWNAQPQPFMGSMISETAAKGMVAAQTNLQNLGGVSLVELTHLEAGTGLVSPGLIDVTAIDVLPDEEYFGPLLQLVRYSDFDQAIKLANQTRYGLSAGLLADSREDYDYFLARIRAGIVNWNKQITGASGAAPFGGVGASGNHRASAFYAADYCAYPVASVEADAVSLPATLSPGLSL</sequence>
<comment type="function">
    <text evidence="1">Catalyzes the NAD-dependent reduction of succinylglutamate semialdehyde into succinylglutamate.</text>
</comment>
<comment type="catalytic activity">
    <reaction evidence="1">
        <text>N-succinyl-L-glutamate 5-semialdehyde + NAD(+) + H2O = N-succinyl-L-glutamate + NADH + 2 H(+)</text>
        <dbReference type="Rhea" id="RHEA:10812"/>
        <dbReference type="ChEBI" id="CHEBI:15377"/>
        <dbReference type="ChEBI" id="CHEBI:15378"/>
        <dbReference type="ChEBI" id="CHEBI:57540"/>
        <dbReference type="ChEBI" id="CHEBI:57945"/>
        <dbReference type="ChEBI" id="CHEBI:58520"/>
        <dbReference type="ChEBI" id="CHEBI:58763"/>
        <dbReference type="EC" id="1.2.1.71"/>
    </reaction>
</comment>
<comment type="pathway">
    <text evidence="1">Amino-acid degradation; L-arginine degradation via AST pathway; L-glutamate and succinate from L-arginine: step 4/5.</text>
</comment>
<comment type="similarity">
    <text evidence="1">Belongs to the aldehyde dehydrogenase family. AstD subfamily.</text>
</comment>
<organism>
    <name type="scientific">Shewanella baltica (strain OS195)</name>
    <dbReference type="NCBI Taxonomy" id="399599"/>
    <lineage>
        <taxon>Bacteria</taxon>
        <taxon>Pseudomonadati</taxon>
        <taxon>Pseudomonadota</taxon>
        <taxon>Gammaproteobacteria</taxon>
        <taxon>Alteromonadales</taxon>
        <taxon>Shewanellaceae</taxon>
        <taxon>Shewanella</taxon>
    </lineage>
</organism>
<name>ASTD_SHEB9</name>
<proteinExistence type="inferred from homology"/>
<feature type="chain" id="PRO_1000085406" description="N-succinylglutamate 5-semialdehyde dehydrogenase">
    <location>
        <begin position="1"/>
        <end position="486"/>
    </location>
</feature>
<feature type="active site" evidence="1">
    <location>
        <position position="243"/>
    </location>
</feature>
<feature type="active site" evidence="1">
    <location>
        <position position="277"/>
    </location>
</feature>
<feature type="binding site" evidence="1">
    <location>
        <begin position="220"/>
        <end position="225"/>
    </location>
    <ligand>
        <name>NAD(+)</name>
        <dbReference type="ChEBI" id="CHEBI:57540"/>
    </ligand>
</feature>
<protein>
    <recommendedName>
        <fullName evidence="1">N-succinylglutamate 5-semialdehyde dehydrogenase</fullName>
        <ecNumber evidence="1">1.2.1.71</ecNumber>
    </recommendedName>
    <alternativeName>
        <fullName evidence="1">Succinylglutamic semialdehyde dehydrogenase</fullName>
        <shortName evidence="1">SGSD</shortName>
    </alternativeName>
</protein>
<gene>
    <name evidence="1" type="primary">astD</name>
    <name type="ordered locus">Sbal195_3878</name>
</gene>